<dbReference type="EMBL" id="AB026979">
    <property type="protein sequence ID" value="BAA81892.1"/>
    <property type="molecule type" value="mRNA"/>
</dbReference>
<dbReference type="EMBL" id="BX005481">
    <property type="status" value="NOT_ANNOTATED_CDS"/>
    <property type="molecule type" value="Genomic_DNA"/>
</dbReference>
<dbReference type="EMBL" id="BX322797">
    <property type="status" value="NOT_ANNOTATED_CDS"/>
    <property type="molecule type" value="Genomic_DNA"/>
</dbReference>
<dbReference type="EMBL" id="BX324137">
    <property type="status" value="NOT_ANNOTATED_CDS"/>
    <property type="molecule type" value="Genomic_DNA"/>
</dbReference>
<dbReference type="EMBL" id="BX324208">
    <property type="status" value="NOT_ANNOTATED_CDS"/>
    <property type="molecule type" value="Genomic_DNA"/>
</dbReference>
<dbReference type="RefSeq" id="NP_571043.1">
    <property type="nucleotide sequence ID" value="NM_130968.1"/>
</dbReference>
<dbReference type="SMR" id="Q9W7R4"/>
<dbReference type="FunCoup" id="Q9W7R4">
    <property type="interactions" value="1084"/>
</dbReference>
<dbReference type="STRING" id="7955.ENSDARP00000079326"/>
<dbReference type="GlyCosmos" id="Q9W7R4">
    <property type="glycosylation" value="17 sites, No reported glycans"/>
</dbReference>
<dbReference type="PaxDb" id="7955-ENSDARP00000109423"/>
<dbReference type="AGR" id="ZFIN:ZDB-GENE-990714-19"/>
<dbReference type="ZFIN" id="ZDB-GENE-990714-19">
    <property type="gene designation" value="tenm3"/>
</dbReference>
<dbReference type="eggNOG" id="KOG4659">
    <property type="taxonomic scope" value="Eukaryota"/>
</dbReference>
<dbReference type="InParanoid" id="Q9W7R4"/>
<dbReference type="OrthoDB" id="442731at2759"/>
<dbReference type="PhylomeDB" id="Q9W7R4"/>
<dbReference type="PRO" id="PR:Q9W7R4"/>
<dbReference type="Proteomes" id="UP000000437">
    <property type="component" value="Chromosome 1"/>
</dbReference>
<dbReference type="Bgee" id="ENSDARG00000005479">
    <property type="expression patterns" value="Expressed in superior colliculus and 58 other cell types or tissues"/>
</dbReference>
<dbReference type="ExpressionAtlas" id="Q9W7R4">
    <property type="expression patterns" value="baseline and differential"/>
</dbReference>
<dbReference type="GO" id="GO:0030424">
    <property type="term" value="C:axon"/>
    <property type="evidence" value="ECO:0007669"/>
    <property type="project" value="UniProtKB-SubCell"/>
</dbReference>
<dbReference type="GO" id="GO:0016020">
    <property type="term" value="C:membrane"/>
    <property type="evidence" value="ECO:0000250"/>
    <property type="project" value="UniProtKB"/>
</dbReference>
<dbReference type="GO" id="GO:0043005">
    <property type="term" value="C:neuron projection"/>
    <property type="evidence" value="ECO:0000318"/>
    <property type="project" value="GO_Central"/>
</dbReference>
<dbReference type="GO" id="GO:0005886">
    <property type="term" value="C:plasma membrane"/>
    <property type="evidence" value="ECO:0000250"/>
    <property type="project" value="UniProtKB"/>
</dbReference>
<dbReference type="GO" id="GO:0050839">
    <property type="term" value="F:cell adhesion molecule binding"/>
    <property type="evidence" value="ECO:0000318"/>
    <property type="project" value="GO_Central"/>
</dbReference>
<dbReference type="GO" id="GO:0046982">
    <property type="term" value="F:protein heterodimerization activity"/>
    <property type="evidence" value="ECO:0000250"/>
    <property type="project" value="UniProtKB"/>
</dbReference>
<dbReference type="GO" id="GO:0042803">
    <property type="term" value="F:protein homodimerization activity"/>
    <property type="evidence" value="ECO:0000250"/>
    <property type="project" value="UniProtKB"/>
</dbReference>
<dbReference type="GO" id="GO:0070983">
    <property type="term" value="P:dendrite guidance"/>
    <property type="evidence" value="ECO:0000315"/>
    <property type="project" value="ZFIN"/>
</dbReference>
<dbReference type="GO" id="GO:0007156">
    <property type="term" value="P:homophilic cell adhesion via plasma membrane adhesion molecules"/>
    <property type="evidence" value="ECO:0000250"/>
    <property type="project" value="UniProtKB"/>
</dbReference>
<dbReference type="GO" id="GO:0048666">
    <property type="term" value="P:neuron development"/>
    <property type="evidence" value="ECO:0000318"/>
    <property type="project" value="GO_Central"/>
</dbReference>
<dbReference type="GO" id="GO:0010976">
    <property type="term" value="P:positive regulation of neuron projection development"/>
    <property type="evidence" value="ECO:0000250"/>
    <property type="project" value="UniProtKB"/>
</dbReference>
<dbReference type="GO" id="GO:1903385">
    <property type="term" value="P:regulation of homophilic cell adhesion"/>
    <property type="evidence" value="ECO:0000250"/>
    <property type="project" value="UniProtKB"/>
</dbReference>
<dbReference type="GO" id="GO:0031290">
    <property type="term" value="P:retinal ganglion cell axon guidance"/>
    <property type="evidence" value="ECO:0000315"/>
    <property type="project" value="ZFIN"/>
</dbReference>
<dbReference type="GO" id="GO:0007165">
    <property type="term" value="P:signal transduction"/>
    <property type="evidence" value="ECO:0007669"/>
    <property type="project" value="InterPro"/>
</dbReference>
<dbReference type="GO" id="GO:0007601">
    <property type="term" value="P:visual perception"/>
    <property type="evidence" value="ECO:0000315"/>
    <property type="project" value="ZFIN"/>
</dbReference>
<dbReference type="CDD" id="cd00054">
    <property type="entry name" value="EGF_CA"/>
    <property type="match status" value="3"/>
</dbReference>
<dbReference type="FunFam" id="2.10.25.10:FF:000016">
    <property type="entry name" value="Teneurin transmembrane protein 2"/>
    <property type="match status" value="1"/>
</dbReference>
<dbReference type="FunFam" id="2.10.25.10:FF:000021">
    <property type="entry name" value="Teneurin transmembrane protein 2"/>
    <property type="match status" value="1"/>
</dbReference>
<dbReference type="FunFam" id="2.10.25.10:FF:000026">
    <property type="entry name" value="Teneurin transmembrane protein 2"/>
    <property type="match status" value="1"/>
</dbReference>
<dbReference type="FunFam" id="2.120.10.30:FF:000003">
    <property type="entry name" value="Teneurin transmembrane protein 2"/>
    <property type="match status" value="1"/>
</dbReference>
<dbReference type="FunFam" id="2.180.10.10:FF:000004">
    <property type="entry name" value="Teneurin transmembrane protein 3"/>
    <property type="match status" value="1"/>
</dbReference>
<dbReference type="FunFam" id="2.10.25.10:FF:000013">
    <property type="entry name" value="Teneurin transmembrane protein 4"/>
    <property type="match status" value="1"/>
</dbReference>
<dbReference type="FunFam" id="2.120.10.30:FF:000005">
    <property type="entry name" value="Teneurin transmembrane protein 4"/>
    <property type="match status" value="1"/>
</dbReference>
<dbReference type="Gene3D" id="2.60.120.260">
    <property type="entry name" value="Galactose-binding domain-like"/>
    <property type="match status" value="1"/>
</dbReference>
<dbReference type="Gene3D" id="2.10.25.10">
    <property type="entry name" value="Laminin"/>
    <property type="match status" value="7"/>
</dbReference>
<dbReference type="Gene3D" id="2.180.10.10">
    <property type="entry name" value="RHS repeat-associated core"/>
    <property type="match status" value="1"/>
</dbReference>
<dbReference type="Gene3D" id="2.120.10.30">
    <property type="entry name" value="TolB, C-terminal domain"/>
    <property type="match status" value="2"/>
</dbReference>
<dbReference type="InterPro" id="IPR011042">
    <property type="entry name" value="6-blade_b-propeller_TolB-like"/>
</dbReference>
<dbReference type="InterPro" id="IPR008969">
    <property type="entry name" value="CarboxyPept-like_regulatory"/>
</dbReference>
<dbReference type="InterPro" id="IPR000742">
    <property type="entry name" value="EGF-like_dom"/>
</dbReference>
<dbReference type="InterPro" id="IPR022385">
    <property type="entry name" value="Rhs_assc_core"/>
</dbReference>
<dbReference type="InterPro" id="IPR009471">
    <property type="entry name" value="Ten_N"/>
</dbReference>
<dbReference type="InterPro" id="IPR056822">
    <property type="entry name" value="TEN_NHL"/>
</dbReference>
<dbReference type="InterPro" id="IPR056820">
    <property type="entry name" value="TEN_TTR-like"/>
</dbReference>
<dbReference type="InterPro" id="IPR056823">
    <property type="entry name" value="TEN_YD-shell"/>
</dbReference>
<dbReference type="InterPro" id="IPR051216">
    <property type="entry name" value="Teneurin"/>
</dbReference>
<dbReference type="InterPro" id="IPR028916">
    <property type="entry name" value="Tox-GHH_dom"/>
</dbReference>
<dbReference type="InterPro" id="IPR006530">
    <property type="entry name" value="YD"/>
</dbReference>
<dbReference type="NCBIfam" id="TIGR03696">
    <property type="entry name" value="Rhs_assc_core"/>
    <property type="match status" value="1"/>
</dbReference>
<dbReference type="NCBIfam" id="TIGR01643">
    <property type="entry name" value="YD_repeat_2x"/>
    <property type="match status" value="1"/>
</dbReference>
<dbReference type="PANTHER" id="PTHR11219">
    <property type="entry name" value="TENEURIN AND N-ACETYLGLUCOSAMINE-1-PHOSPHODIESTER ALPHA-N-ACETYLGLUCOSAMINIDASE"/>
    <property type="match status" value="1"/>
</dbReference>
<dbReference type="PANTHER" id="PTHR11219:SF65">
    <property type="entry name" value="TENEURIN-3"/>
    <property type="match status" value="1"/>
</dbReference>
<dbReference type="Pfam" id="PF25024">
    <property type="entry name" value="EGF_TEN"/>
    <property type="match status" value="1"/>
</dbReference>
<dbReference type="Pfam" id="PF24329">
    <property type="entry name" value="FN-plug_TEN1-4"/>
    <property type="match status" value="1"/>
</dbReference>
<dbReference type="Pfam" id="PF23093">
    <property type="entry name" value="GBD_Tenm3"/>
    <property type="match status" value="1"/>
</dbReference>
<dbReference type="Pfam" id="PF06484">
    <property type="entry name" value="Ten_N"/>
    <property type="match status" value="2"/>
</dbReference>
<dbReference type="Pfam" id="PF25021">
    <property type="entry name" value="TEN_NHL"/>
    <property type="match status" value="1"/>
</dbReference>
<dbReference type="Pfam" id="PF25023">
    <property type="entry name" value="TEN_YD-shell"/>
    <property type="match status" value="1"/>
</dbReference>
<dbReference type="Pfam" id="PF23538">
    <property type="entry name" value="Teneurin_ABD"/>
    <property type="match status" value="1"/>
</dbReference>
<dbReference type="Pfam" id="PF15636">
    <property type="entry name" value="Tox-GHH"/>
    <property type="match status" value="1"/>
</dbReference>
<dbReference type="Pfam" id="PF25020">
    <property type="entry name" value="TTR_TEN1-4"/>
    <property type="match status" value="1"/>
</dbReference>
<dbReference type="SMART" id="SM00181">
    <property type="entry name" value="EGF"/>
    <property type="match status" value="8"/>
</dbReference>
<dbReference type="SUPFAM" id="SSF49464">
    <property type="entry name" value="Carboxypeptidase regulatory domain-like"/>
    <property type="match status" value="1"/>
</dbReference>
<dbReference type="SUPFAM" id="SSF101898">
    <property type="entry name" value="NHL repeat"/>
    <property type="match status" value="1"/>
</dbReference>
<dbReference type="SUPFAM" id="SSF63825">
    <property type="entry name" value="YWTD domain"/>
    <property type="match status" value="1"/>
</dbReference>
<dbReference type="PROSITE" id="PS00022">
    <property type="entry name" value="EGF_1"/>
    <property type="match status" value="8"/>
</dbReference>
<dbReference type="PROSITE" id="PS01186">
    <property type="entry name" value="EGF_2"/>
    <property type="match status" value="7"/>
</dbReference>
<dbReference type="PROSITE" id="PS50026">
    <property type="entry name" value="EGF_3"/>
    <property type="match status" value="4"/>
</dbReference>
<dbReference type="PROSITE" id="PS51361">
    <property type="entry name" value="TENEURIN_N"/>
    <property type="match status" value="1"/>
</dbReference>
<sequence>MDVKERRPYCSLTKSRREKERRYTGSSGDSEDCRVPTQKSYSSSETLKAFDHDSSRLLYGGHVKEMVHREADEYSRQGQNFNLRQLGICEPATRRGLAFCAEMGMPSSLSSPSVTEHSHSQPPSPNLHDNQSSILSNATTQAVQDSDSEEEYTAVLYRPVTQPAPSHSCNEQPSNQHQQGQSTLPPVPPPHKQQPSVTALNHNSLSSRRNVSPAPPAALPAELQTTPESVPLQDSWVLGSNVPLESRHFLFKTGTGTTPLFSTATPGYTMATGAVYSPPTRPLPRNTLSRSAFKFKKSSKYCSWRCTALSAMAVSILLSVLLCYCIAMHLFGLNWQLQETEGYAFENGQVKSDSTATNAVTALSTENKVYFQENNTIDTGEVDVGRRAVQDVPPGTFWRTQLFIDQPQSLKFNISVQRGALVGVYGRKGLPPTHTQYDFVELLDGSRLIAKEKRGLVEVEGAARKARSVNVHEAEFIRFLDSGTWHLAFYNDGKNAEQVSYNTIIIDTLTECPHNCHGNGDCRTGTCHCFPGFLGPDCSRAACPVLCSGNGQYSRGRCLCYSGWKGTECDVPSNQCIDIHCSGHGICIMGTCACNTGYKGDNCEEVDCLDPSCSSHGVCIHGECHCNPGWGGNNCEILKTMCPDQCSGHGTYQTESGTCTCDTNWTGPDCSIEVCAVDCGSHGVCIGGSCRCEEGWTGSVCDLKACHPRCTEHGTCKDGKCECHQGWTGEHCTVEGCPGLCNSNGRCTLDQNGWHCVCQPGWRGAGCDVAMETLCADGKDNEGDGLVDCMDPDCCLQSSCQTQPFCRGSPDPIDIISQNQPASPQQAAQSFYQQISFLTGPESTHVINGENPFNRSLVSIIRGQVLTADGTPLIGVNVSFVHYPDHGYTITRQDGMFDILANGGASLTLSFERAPFLTQFRTVWIPWNVFYVMDTLVMKKEENDIPSCDLSGFIRPSPLIVATPLSTFFRSSPENGPIIPETQVLQEETAIPGSDLNLMYLSSRAAGYRPVLKVTMTQATIPFNLMKVHLMVAVVGRLFQKWFPAEPNLSYTFIWDKTDAYNQRVYGLSEAVVSVGFEYESCLDLILWEKRTAILQGYELDASNMGGWTLDKHHVLDVQNGILYKGNGENVFVSQQPPVISTIMGNGRRRSISCPSCNGQADGNKLLAPVALACGSDGSLFVGDFNYIRRIFPSGNVTSVMELSNNPAHRYYLATDPMTGQLYVSDTNSRRIFRPKALTGTKELLQNAEVVAGTGEQCLPFDEARCGDGGKATEALLLGPKGIAVDKNGFIYFVDGTMIRKVDRNGIISTLLGSNDLTSARPLTCDNSMHIGQVRLEWPTDLAINPMDNSIYVLDNNVVLQITENRQVRIVAGRPMHCQVPGIEYTMGKRAIQTTLEGATAISLSYSGVLYIAETDEKKINRIRQVSTDGEISHLAGAPSDCDCKNDANCDCYQTGDGYAKDARLNAPSSLVVSPDGTLYVADLGNIRIRAIRHNRPPQGSSGLFEVASPASQELYVFDSNGTHQYTMSLVTGDYKYNFSYSNEDDVTAVTDSSGNTLRVRRDPNRMPVRIVAPDNQVIWLTIGTNGGLKTLTAQGQELVLFTYHGNSGLLATKSIQIGWTTFYDYDSEGRLTNVTFPTGVITSLIGEMDRALTVDIETSGRDDDVSITTNLSSIDSFYTLVQDQLRNSYQVGYDNSMRVIYANGMDSHFQTEPHILAGASNPTVARRNMTLPGENGQNLVEWRFRKEQNRGKVVVFGRKLRVNGRNLLSVDYDRSLRTEKIYDDHRKFLLKIVYDASGHPTLWVPSSKLMSVNLTYSSTGQVTSLQRGPTTERVEYDSQGRIVSRTFADAKIWSYTYLDKSMVLLLHSQRQYIFDYDLQDRLSAITMPSVARHTMQTIRSVGYYRNIYNPPESNASVTVDYSEDGQLLRVAHLGTGRRVLYKYRRQNKLSEILYDSTRVSFTYDETAGVLKTVNLQSEGFICSIRYRQIGPLVDRQIFRFSEDGMVNARFDYTYDNSFRVTSMQGVINETPLPIDLYQFDDISGKVEQFGKFGVIYYDINQIISTAVMTYTKHFDVHGRIKEIQYEIFRSLMYWITIQYDNMGRVTKREIKIGPFANTTKYGYEYDVDGQLQTVYLNEKMMWRYNYDLNGNLHLLNPGNSARLTPLRYDLRDRITRLGDVQYRMDEDGFLRQRGAEIFEYNSKGLLVRVHSKASGWTIQYRYDGLGRRLASRNSLGQHLQFFYADLNYPTRITHVYNHSSSEITSLYYDLQGHLFAMEISSGEEFYIACDNTGTPLAVFSSNGLLLKQVQYTAYGEIYFDSNPDFQLVIGFHGGLYDPLTRLLHFGERDYDIQAGRWTTPDISTWTRVGKDPAPFNLYMFRNNNPISKIHEVKEYVTDVNIWLVTFGFHLHNVIPGFPIPKFDLTQPSLEMRKSQLWDDLPSISGVQQEVMRQAKAFLSFERMPEIQLSRRRSSREKPWLWFATVKSLIGKGVMLAITSKGQVATNALNIANEDCIKVATVLNNAFYLEDLHFTVEGRDTHYFIKTSLPESDLGALRLTSGRKSLENGVNVTVSQSTTVVNGRTRRFADVELQYGALALHVRYGMTLDEEKARVLEQARQRALSSAWAREQQRVRDGEEGVRLWTEGEKRQLLSSGKVLGYDGYYVLSVEQYPELADSANNVQFLRQSEIGKR</sequence>
<comment type="function">
    <text evidence="1 7 8">Involved in neural development by regulating the establishment of proper connectivity within the nervous system (PubMed:24183672, PubMed:27374343). Acts in both pre- and postsynaptic neurons in the hippocampus to control the assembly of a precise topographic projection: required in both CA1 and subicular neurons for the precise targeting of proximal CA1 axons to distal subiculum, probably by promoting homophilic cell adhesion (By similarity). Required by retinal ganglion cells for acquisition of their correct morphological and functional connectivity, thereby playing a key role in the development of the visual pathway (PubMed:24183672, PubMed:27374343).</text>
</comment>
<comment type="subunit">
    <text evidence="1">Homodimer; disulfide-linked; to mediate homophilic cell adhesion.</text>
</comment>
<comment type="subcellular location">
    <subcellularLocation>
        <location evidence="1">Cell membrane</location>
        <topology evidence="1">Single-pass membrane protein</topology>
    </subcellularLocation>
    <subcellularLocation>
        <location evidence="1">Cell projection</location>
        <location evidence="1">Axon</location>
    </subcellularLocation>
</comment>
<comment type="alternative products">
    <event type="alternative splicing"/>
    <isoform>
        <id>Q9W7R4-1</id>
        <name>1</name>
        <sequence type="displayed"/>
    </isoform>
    <isoform>
        <id>Q9W7R4-2</id>
        <name>2</name>
        <sequence type="described" ref="VSP_059563"/>
    </isoform>
</comment>
<comment type="tissue specificity">
    <text evidence="7">Expressed by retinal ganglion cells and their presynaptic amacrine and postsynaptic tectal cell targets.</text>
</comment>
<comment type="developmental stage">
    <text evidence="6">Expressed at the notochord and the somite around tailbud stage. At 14 hours post-fertilization (hpf), expressed in the somites, notochord, and the brain. Found in the rhombomere 3 (r3) and r5. Expressed in the optic vesicles and a region covering the caudal diencephalon and the mesencephalon with the strongest expression at its most anterior part. Mesodermal expression is observed in both forming and formed somites. In forming and newly formed somites, transcripts are distributed evenly. In contrast, distribution in somites located on more anterior trunk seems to be uneven, strongest in the ventral, intermediate in the dorsal, and weakest in the medial parts. At 23 hpf, there is no expression in the medial parts of somites. Expression in somites fades away by 36 hpf. At 20 hpf, additional expression is detected in the pharyngeal arches.</text>
</comment>
<comment type="disruption phenotype">
    <text evidence="7">Morpholino knockdown of the protein causes retinal ganglion cell dendrite stratification defects within the inner plexiform layer, as well as mistargeting of dendritic processes into outer portions of the retina.</text>
</comment>
<comment type="similarity">
    <text evidence="9">Belongs to the tenascin family. Teneurin subfamily.</text>
</comment>
<feature type="chain" id="PRO_0000259507" description="Teneurin-3">
    <location>
        <begin position="1"/>
        <end position="2694"/>
    </location>
</feature>
<feature type="topological domain" description="Cytoplasmic" evidence="2">
    <location>
        <begin position="1"/>
        <end position="312"/>
    </location>
</feature>
<feature type="transmembrane region" description="Helical" evidence="2">
    <location>
        <begin position="313"/>
        <end position="333"/>
    </location>
</feature>
<feature type="topological domain" description="Extracellular" evidence="2">
    <location>
        <begin position="334"/>
        <end position="2694"/>
    </location>
</feature>
<feature type="domain" description="Teneurin N-terminal" evidence="4">
    <location>
        <begin position="1"/>
        <end position="306"/>
    </location>
</feature>
<feature type="domain" description="EGF-like 1" evidence="3">
    <location>
        <begin position="508"/>
        <end position="539"/>
    </location>
</feature>
<feature type="domain" description="EGF-like 2" evidence="3">
    <location>
        <begin position="540"/>
        <end position="570"/>
    </location>
</feature>
<feature type="domain" description="EGF-like 3" evidence="3">
    <location>
        <begin position="572"/>
        <end position="604"/>
    </location>
</feature>
<feature type="domain" description="EGF-like 4" evidence="3">
    <location>
        <begin position="605"/>
        <end position="636"/>
    </location>
</feature>
<feature type="domain" description="EGF-like 5" evidence="3">
    <location>
        <begin position="638"/>
        <end position="671"/>
    </location>
</feature>
<feature type="domain" description="EGF-like 6" evidence="3">
    <location>
        <begin position="672"/>
        <end position="703"/>
    </location>
</feature>
<feature type="domain" description="EGF-like 7" evidence="3">
    <location>
        <begin position="704"/>
        <end position="733"/>
    </location>
</feature>
<feature type="domain" description="EGF-like 8" evidence="3">
    <location>
        <begin position="734"/>
        <end position="768"/>
    </location>
</feature>
<feature type="repeat" description="NHL 1">
    <location>
        <begin position="1166"/>
        <end position="1192"/>
    </location>
</feature>
<feature type="repeat" description="NHL 2">
    <location>
        <begin position="1194"/>
        <end position="1238"/>
    </location>
</feature>
<feature type="repeat" description="NHL 3">
    <location>
        <begin position="1264"/>
        <end position="1308"/>
    </location>
</feature>
<feature type="repeat" description="NHL 4">
    <location>
        <begin position="1325"/>
        <end position="1365"/>
    </location>
</feature>
<feature type="repeat" description="NHL 5">
    <location>
        <begin position="1452"/>
        <end position="1495"/>
    </location>
</feature>
<feature type="repeat" description="YD 1">
    <location>
        <begin position="1505"/>
        <end position="1524"/>
    </location>
</feature>
<feature type="repeat" description="YD 2">
    <location>
        <begin position="1541"/>
        <end position="1561"/>
    </location>
</feature>
<feature type="repeat" description="YD 3">
    <location>
        <begin position="1604"/>
        <end position="1623"/>
    </location>
</feature>
<feature type="repeat" description="YD 4">
    <location>
        <begin position="1624"/>
        <end position="1646"/>
    </location>
</feature>
<feature type="repeat" description="YD 5">
    <location>
        <begin position="1817"/>
        <end position="1836"/>
    </location>
</feature>
<feature type="repeat" description="YD 6">
    <location>
        <begin position="1858"/>
        <end position="1876"/>
    </location>
</feature>
<feature type="repeat" description="YD 7">
    <location>
        <begin position="1877"/>
        <end position="1897"/>
    </location>
</feature>
<feature type="repeat" description="YD 8">
    <location>
        <begin position="1904"/>
        <end position="1921"/>
    </location>
</feature>
<feature type="repeat" description="YD 9">
    <location>
        <begin position="1922"/>
        <end position="1943"/>
    </location>
</feature>
<feature type="repeat" description="YD 10">
    <location>
        <begin position="1944"/>
        <end position="1961"/>
    </location>
</feature>
<feature type="repeat" description="YD 11">
    <location>
        <begin position="1964"/>
        <end position="1984"/>
    </location>
</feature>
<feature type="repeat" description="YD 12">
    <location>
        <begin position="1987"/>
        <end position="2007"/>
    </location>
</feature>
<feature type="repeat" description="YD 13">
    <location>
        <begin position="2015"/>
        <end position="2034"/>
    </location>
</feature>
<feature type="repeat" description="YD 14">
    <location>
        <begin position="2040"/>
        <end position="2057"/>
    </location>
</feature>
<feature type="repeat" description="YD 15">
    <location>
        <begin position="2058"/>
        <end position="2084"/>
    </location>
</feature>
<feature type="repeat" description="YD 16">
    <location>
        <begin position="2086"/>
        <end position="2099"/>
    </location>
</feature>
<feature type="repeat" description="YD 17">
    <location>
        <begin position="2100"/>
        <end position="2123"/>
    </location>
</feature>
<feature type="repeat" description="YD 18">
    <location>
        <begin position="2126"/>
        <end position="2146"/>
    </location>
</feature>
<feature type="repeat" description="YD 19">
    <location>
        <begin position="2147"/>
        <end position="2167"/>
    </location>
</feature>
<feature type="repeat" description="YD 20">
    <location>
        <begin position="2169"/>
        <end position="2189"/>
    </location>
</feature>
<feature type="repeat" description="YD 21">
    <location>
        <begin position="2201"/>
        <end position="2221"/>
    </location>
</feature>
<feature type="repeat" description="YD 22">
    <location>
        <begin position="2223"/>
        <end position="2243"/>
    </location>
</feature>
<feature type="repeat" description="YD 23">
    <location>
        <begin position="2269"/>
        <end position="2310"/>
    </location>
</feature>
<feature type="region of interest" description="Disordered" evidence="5">
    <location>
        <begin position="1"/>
        <end position="45"/>
    </location>
</feature>
<feature type="region of interest" description="Disordered" evidence="5">
    <location>
        <begin position="106"/>
        <end position="132"/>
    </location>
</feature>
<feature type="region of interest" description="Disordered" evidence="5">
    <location>
        <begin position="161"/>
        <end position="198"/>
    </location>
</feature>
<feature type="compositionally biased region" description="Polar residues" evidence="5">
    <location>
        <begin position="163"/>
        <end position="184"/>
    </location>
</feature>
<feature type="glycosylation site" description="N-linked (GlcNAc...) asparagine" evidence="2">
    <location>
        <position position="374"/>
    </location>
</feature>
<feature type="glycosylation site" description="N-linked (GlcNAc...) asparagine" evidence="2">
    <location>
        <position position="413"/>
    </location>
</feature>
<feature type="glycosylation site" description="N-linked (GlcNAc...) asparagine" evidence="2">
    <location>
        <position position="664"/>
    </location>
</feature>
<feature type="glycosylation site" description="N-linked (GlcNAc...) asparagine" evidence="2">
    <location>
        <position position="854"/>
    </location>
</feature>
<feature type="glycosylation site" description="N-linked (GlcNAc...) asparagine" evidence="2">
    <location>
        <position position="877"/>
    </location>
</feature>
<feature type="glycosylation site" description="N-linked (GlcNAc...) asparagine" evidence="2">
    <location>
        <position position="1048"/>
    </location>
</feature>
<feature type="glycosylation site" description="N-linked (GlcNAc...) asparagine" evidence="2">
    <location>
        <position position="1196"/>
    </location>
</feature>
<feature type="glycosylation site" description="N-linked (GlcNAc...) asparagine" evidence="2">
    <location>
        <position position="1521"/>
    </location>
</feature>
<feature type="glycosylation site" description="N-linked (GlcNAc...) asparagine" evidence="2">
    <location>
        <position position="1538"/>
    </location>
</feature>
<feature type="glycosylation site" description="N-linked (GlcNAc...) asparagine" evidence="2">
    <location>
        <position position="1634"/>
    </location>
</feature>
<feature type="glycosylation site" description="N-linked (GlcNAc...) asparagine" evidence="2">
    <location>
        <position position="1671"/>
    </location>
</feature>
<feature type="glycosylation site" description="N-linked (GlcNAc...) asparagine" evidence="2">
    <location>
        <position position="1729"/>
    </location>
</feature>
<feature type="glycosylation site" description="N-linked (GlcNAc...) asparagine" evidence="2">
    <location>
        <position position="1814"/>
    </location>
</feature>
<feature type="glycosylation site" description="N-linked (GlcNAc...) asparagine" evidence="2">
    <location>
        <position position="1915"/>
    </location>
</feature>
<feature type="glycosylation site" description="N-linked (GlcNAc...) asparagine" evidence="2">
    <location>
        <position position="2118"/>
    </location>
</feature>
<feature type="glycosylation site" description="N-linked (GlcNAc...) asparagine" evidence="2">
    <location>
        <position position="2258"/>
    </location>
</feature>
<feature type="glycosylation site" description="N-linked (GlcNAc...) asparagine" evidence="2">
    <location>
        <position position="2571"/>
    </location>
</feature>
<feature type="disulfide bond" evidence="3">
    <location>
        <begin position="512"/>
        <end position="522"/>
    </location>
</feature>
<feature type="disulfide bond" evidence="3">
    <location>
        <begin position="516"/>
        <end position="527"/>
    </location>
</feature>
<feature type="disulfide bond" evidence="3">
    <location>
        <begin position="529"/>
        <end position="538"/>
    </location>
</feature>
<feature type="disulfide bond" evidence="3">
    <location>
        <begin position="547"/>
        <end position="558"/>
    </location>
</feature>
<feature type="disulfide bond" evidence="3">
    <location>
        <begin position="560"/>
        <end position="569"/>
    </location>
</feature>
<feature type="disulfide bond" evidence="3">
    <location>
        <begin position="576"/>
        <end position="587"/>
    </location>
</feature>
<feature type="disulfide bond" evidence="3">
    <location>
        <begin position="581"/>
        <end position="592"/>
    </location>
</feature>
<feature type="disulfide bond" evidence="3">
    <location>
        <begin position="594"/>
        <end position="603"/>
    </location>
</feature>
<feature type="disulfide bond" evidence="3">
    <location>
        <begin position="608"/>
        <end position="619"/>
    </location>
</feature>
<feature type="disulfide bond" evidence="3">
    <location>
        <begin position="613"/>
        <end position="624"/>
    </location>
</feature>
<feature type="disulfide bond" evidence="3">
    <location>
        <begin position="626"/>
        <end position="635"/>
    </location>
</feature>
<feature type="disulfide bond" evidence="3">
    <location>
        <begin position="646"/>
        <end position="659"/>
    </location>
</feature>
<feature type="disulfide bond" evidence="3">
    <location>
        <begin position="661"/>
        <end position="670"/>
    </location>
</feature>
<feature type="disulfide bond" evidence="3">
    <location>
        <begin position="675"/>
        <end position="685"/>
    </location>
</feature>
<feature type="disulfide bond" evidence="3">
    <location>
        <begin position="679"/>
        <end position="690"/>
    </location>
</feature>
<feature type="disulfide bond" evidence="3">
    <location>
        <begin position="692"/>
        <end position="701"/>
    </location>
</feature>
<feature type="disulfide bond" evidence="3">
    <location>
        <begin position="706"/>
        <end position="716"/>
    </location>
</feature>
<feature type="disulfide bond" evidence="3">
    <location>
        <begin position="710"/>
        <end position="721"/>
    </location>
</feature>
<feature type="disulfide bond" evidence="3">
    <location>
        <begin position="723"/>
        <end position="732"/>
    </location>
</feature>
<feature type="disulfide bond" evidence="3">
    <location>
        <begin position="737"/>
        <end position="747"/>
    </location>
</feature>
<feature type="disulfide bond" evidence="3">
    <location>
        <begin position="741"/>
        <end position="756"/>
    </location>
</feature>
<feature type="disulfide bond" evidence="3">
    <location>
        <begin position="758"/>
        <end position="767"/>
    </location>
</feature>
<feature type="splice variant" id="VSP_059563" description="In isoform 2.">
    <location>
        <begin position="1"/>
        <end position="104"/>
    </location>
</feature>
<feature type="sequence conflict" description="In Ref. 1; BAA81892." evidence="9" ref="1">
    <original>N</original>
    <variation>S</variation>
    <location>
        <position position="781"/>
    </location>
</feature>
<feature type="sequence conflict" description="In Ref. 1; BAA81892." evidence="9" ref="1">
    <original>I</original>
    <variation>F</variation>
    <location>
        <position position="813"/>
    </location>
</feature>
<feature type="sequence conflict" description="In Ref. 1; BAA81892." evidence="9" ref="1">
    <original>R</original>
    <variation>Q</variation>
    <location>
        <position position="892"/>
    </location>
</feature>
<feature type="sequence conflict" description="In Ref. 1; BAA81892." evidence="9" ref="1">
    <original>R</original>
    <variation>G</variation>
    <location>
        <position position="1210"/>
    </location>
</feature>
<feature type="sequence conflict" description="In Ref. 1; BAA81892." evidence="9" ref="1">
    <original>QDRLS</original>
    <variation>HGKQI</variation>
    <location>
        <begin position="1880"/>
        <end position="1884"/>
    </location>
</feature>
<feature type="sequence conflict" description="In Ref. 1; BAA81892." evidence="9" ref="1">
    <original>A</original>
    <variation>V</variation>
    <location>
        <position position="2520"/>
    </location>
</feature>
<accession>Q9W7R4</accession>
<accession>E7EYS1</accession>
<name>TEN3_DANRE</name>
<protein>
    <recommendedName>
        <fullName>Teneurin-3</fullName>
        <shortName>Ten-3</shortName>
    </recommendedName>
    <alternativeName>
        <fullName>Protein Odd Oz/ten-m homolog 3</fullName>
    </alternativeName>
    <alternativeName>
        <fullName>Tenascin-M3</fullName>
        <shortName>Ten-m3</shortName>
    </alternativeName>
    <alternativeName>
        <fullName>Teneurin transmembrane protein 3</fullName>
    </alternativeName>
</protein>
<organism>
    <name type="scientific">Danio rerio</name>
    <name type="common">Zebrafish</name>
    <name type="synonym">Brachydanio rerio</name>
    <dbReference type="NCBI Taxonomy" id="7955"/>
    <lineage>
        <taxon>Eukaryota</taxon>
        <taxon>Metazoa</taxon>
        <taxon>Chordata</taxon>
        <taxon>Craniata</taxon>
        <taxon>Vertebrata</taxon>
        <taxon>Euteleostomi</taxon>
        <taxon>Actinopterygii</taxon>
        <taxon>Neopterygii</taxon>
        <taxon>Teleostei</taxon>
        <taxon>Ostariophysi</taxon>
        <taxon>Cypriniformes</taxon>
        <taxon>Danionidae</taxon>
        <taxon>Danioninae</taxon>
        <taxon>Danio</taxon>
    </lineage>
</organism>
<gene>
    <name type="primary">tenm3</name>
    <name type="synonym">odz3</name>
    <name type="synonym">tnm3</name>
</gene>
<evidence type="ECO:0000250" key="1">
    <source>
        <dbReference type="UniProtKB" id="Q9WTS6"/>
    </source>
</evidence>
<evidence type="ECO:0000255" key="2"/>
<evidence type="ECO:0000255" key="3">
    <source>
        <dbReference type="PROSITE-ProRule" id="PRU00076"/>
    </source>
</evidence>
<evidence type="ECO:0000255" key="4">
    <source>
        <dbReference type="PROSITE-ProRule" id="PRU00694"/>
    </source>
</evidence>
<evidence type="ECO:0000256" key="5">
    <source>
        <dbReference type="SAM" id="MobiDB-lite"/>
    </source>
</evidence>
<evidence type="ECO:0000269" key="6">
    <source>
    </source>
</evidence>
<evidence type="ECO:0000269" key="7">
    <source>
    </source>
</evidence>
<evidence type="ECO:0000269" key="8">
    <source>
    </source>
</evidence>
<evidence type="ECO:0000305" key="9"/>
<keyword id="KW-0025">Alternative splicing</keyword>
<keyword id="KW-0130">Cell adhesion</keyword>
<keyword id="KW-1003">Cell membrane</keyword>
<keyword id="KW-0966">Cell projection</keyword>
<keyword id="KW-0221">Differentiation</keyword>
<keyword id="KW-1015">Disulfide bond</keyword>
<keyword id="KW-0245">EGF-like domain</keyword>
<keyword id="KW-0325">Glycoprotein</keyword>
<keyword id="KW-0472">Membrane</keyword>
<keyword id="KW-1185">Reference proteome</keyword>
<keyword id="KW-0677">Repeat</keyword>
<keyword id="KW-0812">Transmembrane</keyword>
<keyword id="KW-1133">Transmembrane helix</keyword>
<reference key="1">
    <citation type="journal article" date="1999" name="Mech. Dev.">
        <title>Compartmentalized expression of zebrafish ten-m3 and ten-m4, homologues of the Drosophila tenm /odd Oz gene, in the central nervous system.</title>
        <authorList>
            <person name="Mieda M."/>
            <person name="Kikuchi Y."/>
            <person name="Hirate Y."/>
            <person name="Aoki M."/>
            <person name="Okamoto H."/>
        </authorList>
    </citation>
    <scope>NUCLEOTIDE SEQUENCE [MRNA] (ISOFORM 2)</scope>
    <scope>DEVELOPMENTAL STAGE</scope>
    <source>
        <tissue>Embryo</tissue>
    </source>
</reference>
<reference key="2">
    <citation type="journal article" date="2013" name="Nature">
        <title>The zebrafish reference genome sequence and its relationship to the human genome.</title>
        <authorList>
            <person name="Howe K."/>
            <person name="Clark M.D."/>
            <person name="Torroja C.F."/>
            <person name="Torrance J."/>
            <person name="Berthelot C."/>
            <person name="Muffato M."/>
            <person name="Collins J.E."/>
            <person name="Humphray S."/>
            <person name="McLaren K."/>
            <person name="Matthews L."/>
            <person name="McLaren S."/>
            <person name="Sealy I."/>
            <person name="Caccamo M."/>
            <person name="Churcher C."/>
            <person name="Scott C."/>
            <person name="Barrett J.C."/>
            <person name="Koch R."/>
            <person name="Rauch G.J."/>
            <person name="White S."/>
            <person name="Chow W."/>
            <person name="Kilian B."/>
            <person name="Quintais L.T."/>
            <person name="Guerra-Assuncao J.A."/>
            <person name="Zhou Y."/>
            <person name="Gu Y."/>
            <person name="Yen J."/>
            <person name="Vogel J.H."/>
            <person name="Eyre T."/>
            <person name="Redmond S."/>
            <person name="Banerjee R."/>
            <person name="Chi J."/>
            <person name="Fu B."/>
            <person name="Langley E."/>
            <person name="Maguire S.F."/>
            <person name="Laird G.K."/>
            <person name="Lloyd D."/>
            <person name="Kenyon E."/>
            <person name="Donaldson S."/>
            <person name="Sehra H."/>
            <person name="Almeida-King J."/>
            <person name="Loveland J."/>
            <person name="Trevanion S."/>
            <person name="Jones M."/>
            <person name="Quail M."/>
            <person name="Willey D."/>
            <person name="Hunt A."/>
            <person name="Burton J."/>
            <person name="Sims S."/>
            <person name="McLay K."/>
            <person name="Plumb B."/>
            <person name="Davis J."/>
            <person name="Clee C."/>
            <person name="Oliver K."/>
            <person name="Clark R."/>
            <person name="Riddle C."/>
            <person name="Elliot D."/>
            <person name="Threadgold G."/>
            <person name="Harden G."/>
            <person name="Ware D."/>
            <person name="Begum S."/>
            <person name="Mortimore B."/>
            <person name="Kerry G."/>
            <person name="Heath P."/>
            <person name="Phillimore B."/>
            <person name="Tracey A."/>
            <person name="Corby N."/>
            <person name="Dunn M."/>
            <person name="Johnson C."/>
            <person name="Wood J."/>
            <person name="Clark S."/>
            <person name="Pelan S."/>
            <person name="Griffiths G."/>
            <person name="Smith M."/>
            <person name="Glithero R."/>
            <person name="Howden P."/>
            <person name="Barker N."/>
            <person name="Lloyd C."/>
            <person name="Stevens C."/>
            <person name="Harley J."/>
            <person name="Holt K."/>
            <person name="Panagiotidis G."/>
            <person name="Lovell J."/>
            <person name="Beasley H."/>
            <person name="Henderson C."/>
            <person name="Gordon D."/>
            <person name="Auger K."/>
            <person name="Wright D."/>
            <person name="Collins J."/>
            <person name="Raisen C."/>
            <person name="Dyer L."/>
            <person name="Leung K."/>
            <person name="Robertson L."/>
            <person name="Ambridge K."/>
            <person name="Leongamornlert D."/>
            <person name="McGuire S."/>
            <person name="Gilderthorp R."/>
            <person name="Griffiths C."/>
            <person name="Manthravadi D."/>
            <person name="Nichol S."/>
            <person name="Barker G."/>
            <person name="Whitehead S."/>
            <person name="Kay M."/>
            <person name="Brown J."/>
            <person name="Murnane C."/>
            <person name="Gray E."/>
            <person name="Humphries M."/>
            <person name="Sycamore N."/>
            <person name="Barker D."/>
            <person name="Saunders D."/>
            <person name="Wallis J."/>
            <person name="Babbage A."/>
            <person name="Hammond S."/>
            <person name="Mashreghi-Mohammadi M."/>
            <person name="Barr L."/>
            <person name="Martin S."/>
            <person name="Wray P."/>
            <person name="Ellington A."/>
            <person name="Matthews N."/>
            <person name="Ellwood M."/>
            <person name="Woodmansey R."/>
            <person name="Clark G."/>
            <person name="Cooper J."/>
            <person name="Tromans A."/>
            <person name="Grafham D."/>
            <person name="Skuce C."/>
            <person name="Pandian R."/>
            <person name="Andrews R."/>
            <person name="Harrison E."/>
            <person name="Kimberley A."/>
            <person name="Garnett J."/>
            <person name="Fosker N."/>
            <person name="Hall R."/>
            <person name="Garner P."/>
            <person name="Kelly D."/>
            <person name="Bird C."/>
            <person name="Palmer S."/>
            <person name="Gehring I."/>
            <person name="Berger A."/>
            <person name="Dooley C.M."/>
            <person name="Ersan-Urun Z."/>
            <person name="Eser C."/>
            <person name="Geiger H."/>
            <person name="Geisler M."/>
            <person name="Karotki L."/>
            <person name="Kirn A."/>
            <person name="Konantz J."/>
            <person name="Konantz M."/>
            <person name="Oberlander M."/>
            <person name="Rudolph-Geiger S."/>
            <person name="Teucke M."/>
            <person name="Lanz C."/>
            <person name="Raddatz G."/>
            <person name="Osoegawa K."/>
            <person name="Zhu B."/>
            <person name="Rapp A."/>
            <person name="Widaa S."/>
            <person name="Langford C."/>
            <person name="Yang F."/>
            <person name="Schuster S.C."/>
            <person name="Carter N.P."/>
            <person name="Harrow J."/>
            <person name="Ning Z."/>
            <person name="Herrero J."/>
            <person name="Searle S.M."/>
            <person name="Enright A."/>
            <person name="Geisler R."/>
            <person name="Plasterk R.H."/>
            <person name="Lee C."/>
            <person name="Westerfield M."/>
            <person name="de Jong P.J."/>
            <person name="Zon L.I."/>
            <person name="Postlethwait J.H."/>
            <person name="Nusslein-Volhard C."/>
            <person name="Hubbard T.J."/>
            <person name="Roest Crollius H."/>
            <person name="Rogers J."/>
            <person name="Stemple D.L."/>
        </authorList>
    </citation>
    <scope>NUCLEOTIDE SEQUENCE [LARGE SCALE GENOMIC DNA]</scope>
    <source>
        <strain>Tuebingen</strain>
    </source>
</reference>
<reference key="3">
    <citation type="journal article" date="2013" name="Cell Rep.">
        <title>Teneurin-3 specifies morphological and functional connectivity of retinal ganglion cells in the vertebrate visual system.</title>
        <authorList>
            <person name="Antinucci P."/>
            <person name="Nikolaou N."/>
            <person name="Meyer M.P."/>
            <person name="Hindges R."/>
        </authorList>
    </citation>
    <scope>FUNCTION</scope>
    <scope>TISSUE SPECIFICITY</scope>
    <scope>DISRUPTION PHENOTYPE</scope>
</reference>
<reference key="4">
    <citation type="journal article" date="2016" name="Curr. Biol.">
        <title>Neural Mechanisms Generating Orientation Selectivity in the Retina.</title>
        <authorList>
            <person name="Antinucci P."/>
            <person name="Suleyman O."/>
            <person name="Monfries C."/>
            <person name="Hindges R."/>
        </authorList>
    </citation>
    <scope>FUNCTION</scope>
</reference>
<proteinExistence type="evidence at transcript level"/>